<evidence type="ECO:0000269" key="1">
    <source>
    </source>
</evidence>
<evidence type="ECO:0000269" key="2">
    <source>
    </source>
</evidence>
<evidence type="ECO:0000269" key="3">
    <source>
    </source>
</evidence>
<evidence type="ECO:0000269" key="4">
    <source>
    </source>
</evidence>
<evidence type="ECO:0000269" key="5">
    <source>
    </source>
</evidence>
<evidence type="ECO:0000269" key="6">
    <source>
    </source>
</evidence>
<evidence type="ECO:0000269" key="7">
    <source>
    </source>
</evidence>
<evidence type="ECO:0000305" key="8"/>
<evidence type="ECO:0000305" key="9">
    <source>
    </source>
</evidence>
<evidence type="ECO:0000305" key="10">
    <source>
    </source>
</evidence>
<evidence type="ECO:0007744" key="11">
    <source>
        <dbReference type="PDB" id="7AHL"/>
    </source>
</evidence>
<evidence type="ECO:0007829" key="12">
    <source>
        <dbReference type="PDB" id="3M4D"/>
    </source>
</evidence>
<evidence type="ECO:0007829" key="13">
    <source>
        <dbReference type="PDB" id="4IDJ"/>
    </source>
</evidence>
<evidence type="ECO:0007829" key="14">
    <source>
        <dbReference type="PDB" id="7AHL"/>
    </source>
</evidence>
<evidence type="ECO:0007829" key="15">
    <source>
        <dbReference type="PDB" id="8JX3"/>
    </source>
</evidence>
<sequence length="319" mass="35904">MKTRIVSSVTTTLLLGSILMNPVAGAADSDINIKTGTTDIGSNTTVKTGDLVTYDKENGMHKKVFYSFIDDKNHNKKLLVIRTKGTIAGQYRVYSEEGANKSGLAWPSAFKVQLQLPDNEVAQISDYYPRNSIDTKEYMSTLTYGFNGNVTGDDTGKIGGLIGANVSIGHTLKYVQPDFKTILESPTDKKVGWKVIFNNMVNQNWGPYDRDSWNPVYGNQLFMKTRNGSMKAADNFLDPNKASSLLSSGFSPDFATVITMDRKASKQQTNIDVIYERVRDDYQLHWTSTNWKGTNTKDKWTDRSSERYKIDWEKEEMTN</sequence>
<gene>
    <name type="primary">hly</name>
    <name type="synonym">hla</name>
</gene>
<protein>
    <recommendedName>
        <fullName>Alpha-hemolysin</fullName>
        <shortName>Alpha-HL</shortName>
    </recommendedName>
    <alternativeName>
        <fullName>Alpha-toxin</fullName>
    </alternativeName>
</protein>
<feature type="signal peptide" evidence="4">
    <location>
        <begin position="1"/>
        <end position="26"/>
    </location>
</feature>
<feature type="chain" id="PRO_0000035636" description="Alpha-hemolysin">
    <location>
        <begin position="27"/>
        <end position="319"/>
    </location>
</feature>
<feature type="mutagenesis site" description="Binds host red blood cells, complete loss of hemolytic activity, no longer oligomerizes." evidence="1">
    <location>
        <begin position="28"/>
        <end position="65"/>
    </location>
</feature>
<feature type="mutagenesis site" description="Binds host red blood cells, complete loss of hemolytic activity, forms hexamers." evidence="1">
    <location>
        <begin position="28"/>
        <end position="49"/>
    </location>
</feature>
<feature type="mutagenesis site" description="Binds host red blood cells, complete loss of hemolytic activity, mainly forms pentamers." evidence="1">
    <location>
        <begin position="28"/>
        <end position="39"/>
    </location>
</feature>
<feature type="mutagenesis site" description="Binds host red blood cells, complete loss of hemolytic activity, mainly forms pentamers." evidence="1">
    <location>
        <begin position="28"/>
        <end position="29"/>
    </location>
</feature>
<feature type="mutagenesis site" description="No oligomerization nor hemolytic activity, wild-type target cell-binding." evidence="6">
    <original>H</original>
    <variation>I</variation>
    <variation>L</variation>
    <variation>P</variation>
    <variation>R</variation>
    <variation>S</variation>
    <variation>T</variation>
    <location>
        <position position="61"/>
    </location>
</feature>
<feature type="mutagenesis site" description="No hemolytic activity, reduced oligomerization, not toxic in mice, no effect on ADAM10 binding." evidence="3 5">
    <original>H</original>
    <variation>L</variation>
    <location>
        <position position="61"/>
    </location>
</feature>
<feature type="mutagenesis site" description="No oligomerization, altered hemolysis, near wild-type target cell binding." evidence="6">
    <original>H</original>
    <variation>I</variation>
    <variation>R</variation>
    <variation>T</variation>
    <location>
        <position position="74"/>
    </location>
</feature>
<feature type="mutagenesis site" description="7% of normal hemolytic activity, reduced toxicity in mice." evidence="5">
    <original>H</original>
    <variation>L</variation>
    <location>
        <position position="74"/>
    </location>
</feature>
<feature type="mutagenesis site" description="Decreased hemolysis, wild-type oligomerization and target cell binding." evidence="6">
    <original>H</original>
    <variation>L</variation>
    <variation>P</variation>
    <variation>R</variation>
    <location>
        <position position="170"/>
    </location>
</feature>
<feature type="mutagenesis site" description="16% of normal hemolytic activity." evidence="5">
    <original>H</original>
    <variation>L</variation>
    <location>
        <position position="170"/>
    </location>
</feature>
<feature type="mutagenesis site" description="Nearly wild-type oligomerization, hemolysis and target cell binding." evidence="6">
    <original>H</original>
    <variation>I</variation>
    <variation>P</variation>
    <variation>R</variation>
    <variation>S</variation>
    <location>
        <position position="285"/>
    </location>
</feature>
<feature type="mutagenesis site" description="46% of normal hemolytic activity, slowly toxic in mice." evidence="5">
    <original>H</original>
    <variation>L</variation>
    <location>
        <position position="285"/>
    </location>
</feature>
<feature type="mutagenesis site" description="Binds host red blood cells, complete loss of hemolytic activity, no longer oligomerizes." evidence="1">
    <location>
        <begin position="312"/>
        <end position="319"/>
    </location>
</feature>
<feature type="mutagenesis site" description="Binds host red blood cells, almost complete loss of hemolytic activity, greatly reduced oligomerization." evidence="1 2">
    <location>
        <begin position="315"/>
        <end position="319"/>
    </location>
</feature>
<feature type="mutagenesis site" description="Binds host red blood cells, almost complete loss of hemolytic activity, greatly reduced oligomerization." evidence="1">
    <location>
        <begin position="317"/>
        <end position="319"/>
    </location>
</feature>
<feature type="helix" evidence="14">
    <location>
        <begin position="28"/>
        <end position="31"/>
    </location>
</feature>
<feature type="turn" evidence="14">
    <location>
        <begin position="35"/>
        <end position="38"/>
    </location>
</feature>
<feature type="strand" evidence="13">
    <location>
        <begin position="40"/>
        <end position="43"/>
    </location>
</feature>
<feature type="strand" evidence="14">
    <location>
        <begin position="47"/>
        <end position="55"/>
    </location>
</feature>
<feature type="turn" evidence="14">
    <location>
        <begin position="56"/>
        <end position="59"/>
    </location>
</feature>
<feature type="strand" evidence="14">
    <location>
        <begin position="60"/>
        <end position="69"/>
    </location>
</feature>
<feature type="strand" evidence="14">
    <location>
        <begin position="74"/>
        <end position="87"/>
    </location>
</feature>
<feature type="strand" evidence="12">
    <location>
        <begin position="92"/>
        <end position="95"/>
    </location>
</feature>
<feature type="turn" evidence="15">
    <location>
        <begin position="98"/>
        <end position="100"/>
    </location>
</feature>
<feature type="strand" evidence="14">
    <location>
        <begin position="101"/>
        <end position="115"/>
    </location>
</feature>
<feature type="strand" evidence="14">
    <location>
        <begin position="123"/>
        <end position="129"/>
    </location>
</feature>
<feature type="strand" evidence="14">
    <location>
        <begin position="135"/>
        <end position="153"/>
    </location>
</feature>
<feature type="strand" evidence="14">
    <location>
        <begin position="158"/>
        <end position="184"/>
    </location>
</feature>
<feature type="strand" evidence="14">
    <location>
        <begin position="188"/>
        <end position="197"/>
    </location>
</feature>
<feature type="strand" evidence="14">
    <location>
        <begin position="200"/>
        <end position="202"/>
    </location>
</feature>
<feature type="strand" evidence="14">
    <location>
        <begin position="205"/>
        <end position="208"/>
    </location>
</feature>
<feature type="turn" evidence="14">
    <location>
        <begin position="215"/>
        <end position="217"/>
    </location>
</feature>
<feature type="strand" evidence="15">
    <location>
        <begin position="221"/>
        <end position="224"/>
    </location>
</feature>
<feature type="helix" evidence="14">
    <location>
        <begin position="232"/>
        <end position="234"/>
    </location>
</feature>
<feature type="helix" evidence="14">
    <location>
        <begin position="239"/>
        <end position="241"/>
    </location>
</feature>
<feature type="helix" evidence="14">
    <location>
        <begin position="244"/>
        <end position="247"/>
    </location>
</feature>
<feature type="strand" evidence="14">
    <location>
        <begin position="254"/>
        <end position="260"/>
    </location>
</feature>
<feature type="strand" evidence="14">
    <location>
        <begin position="268"/>
        <end position="286"/>
    </location>
</feature>
<feature type="strand" evidence="14">
    <location>
        <begin position="288"/>
        <end position="311"/>
    </location>
</feature>
<feature type="turn" evidence="14">
    <location>
        <begin position="312"/>
        <end position="315"/>
    </location>
</feature>
<feature type="strand" evidence="14">
    <location>
        <begin position="316"/>
        <end position="318"/>
    </location>
</feature>
<comment type="function">
    <text evidence="2 3">Alpha-toxin binds to the membrane of eukaryotic cells (particularly red blood cells, RBC) forming pores, resulting in hemolysis, with the release of low-molecular weight molecules leading to eventual osmotic RBC lysis (PubMed:1587866, PubMed:20624979). Human RBCs bind much less alpha-toxin than do rabbit RBCs (PubMed:1587866, PubMed:20624979). Heptamer oligomerization and pore formation is required for lytic activity (PubMed:1587866, PubMed:20624979).</text>
</comment>
<comment type="subunit">
    <text evidence="3 7 9 10">Self-assembles to first form a non-lytic oligomeric intermediate, and then, a mushroom-shaped homoheptamer structure of 100 Angstroms in length and up to 100 Angstroms in diameter (Probable) (PubMed:8943190). Interacts with human ADAM10; this interaction is required for toxin pore formation, disruption of focal adhesions, and hly-mediated cytotoxicity (PubMed:20624979).</text>
</comment>
<comment type="interaction">
    <interactant intactId="EBI-15848589">
        <id>P09616</id>
    </interactant>
    <interactant intactId="EBI-15848589">
        <id>P09616</id>
        <label>hly</label>
    </interactant>
    <organismsDiffer>false</organismsDiffer>
    <experiments>6</experiments>
</comment>
<comment type="subcellular location">
    <subcellularLocation>
        <location evidence="7">Secreted</location>
    </subcellularLocation>
    <text evidence="7">Secreted as a monomer (PubMed:8943190). After oligomerization and pore formation, the complex is translocated across the bilayer, probably via the Gly-rich domain of each strand.</text>
</comment>
<comment type="domain">
    <text evidence="7">The mushroom-shaped heptamer is composed of a cap domain (comprising 7 beta sandwiches and the amino latches of each protomer), 7 rim regions whose protruding strands may interact with the membrane bilayer, and the stem domain (52 Angstroms in length, 26 Angstroms in diameter) which forms the transmembrane pore.</text>
</comment>
<comment type="similarity">
    <text evidence="8">Belongs to the aerolysin family.</text>
</comment>
<keyword id="KW-0002">3D-structure</keyword>
<keyword id="KW-0204">Cytolysis</keyword>
<keyword id="KW-0903">Direct protein sequencing</keyword>
<keyword id="KW-0354">Hemolysis</keyword>
<keyword id="KW-0964">Secreted</keyword>
<keyword id="KW-0732">Signal</keyword>
<keyword id="KW-0800">Toxin</keyword>
<keyword id="KW-0843">Virulence</keyword>
<organism>
    <name type="scientific">Staphylococcus aureus</name>
    <dbReference type="NCBI Taxonomy" id="1280"/>
    <lineage>
        <taxon>Bacteria</taxon>
        <taxon>Bacillati</taxon>
        <taxon>Bacillota</taxon>
        <taxon>Bacilli</taxon>
        <taxon>Bacillales</taxon>
        <taxon>Staphylococcaceae</taxon>
        <taxon>Staphylococcus</taxon>
    </lineage>
</organism>
<proteinExistence type="evidence at protein level"/>
<reference key="1">
    <citation type="journal article" date="1984" name="Infect. Immun.">
        <title>Primary sequence of the alpha-toxin gene from Staphylococcus aureus wood 46.</title>
        <authorList>
            <person name="Gray G.S."/>
            <person name="Kehoe M."/>
        </authorList>
    </citation>
    <scope>NUCLEOTIDE SEQUENCE [GENOMIC DNA]</scope>
    <scope>PROTEIN SEQUENCE OF 27-44</scope>
    <source>
        <strain>ATCC 10832 / Wood 46</strain>
    </source>
</reference>
<reference key="2">
    <citation type="submission" date="1992-10" db="EMBL/GenBank/DDBJ databases">
        <authorList>
            <person name="Hedengrahn G."/>
        </authorList>
    </citation>
    <scope>NUCLEOTIDE SEQUENCE [GENOMIC DNA]</scope>
    <scope>SEQUENCE REVISION</scope>
    <source>
        <strain>ATCC 10832 / Wood 46</strain>
    </source>
</reference>
<reference key="3">
    <citation type="journal article" date="1992" name="J. Biol. Chem.">
        <title>Functional expression of the alpha-hemolysin of Staphylococcus aureus in intact Escherichia coli and in cell lysates. Deletion of five C-terminal amino acids selectively impairs hemolytic activity.</title>
        <authorList>
            <person name="Walker B."/>
            <person name="Krishnasastry M."/>
            <person name="Zorn L."/>
            <person name="Kasianowicz J."/>
            <person name="Bayley H."/>
        </authorList>
    </citation>
    <scope>NUCLEOTIDE SEQUENCE [GENOMIC DNA] OF 27-319</scope>
    <scope>FUNCTION</scope>
    <scope>SUBUNIT</scope>
    <scope>MUTAGENESIS OF 315-GLU--ASN-319</scope>
    <source>
        <strain>ATCC 10832 / Wood 46</strain>
    </source>
</reference>
<reference evidence="11" key="4">
    <citation type="journal article" date="1996" name="Science">
        <title>Structure of staphylococcal alpha-hemolysin, a heptameric transmembrane pore.</title>
        <authorList>
            <person name="Song L."/>
            <person name="Hobaugh M.R."/>
            <person name="Shustak C."/>
            <person name="Cheley S."/>
            <person name="Bayley H."/>
            <person name="Gouaux J.E."/>
        </authorList>
    </citation>
    <scope>X-RAY CRYSTALLOGRAPHY (1.89 ANGSTROMS) OF 27-319</scope>
    <scope>SUBUNIT</scope>
    <scope>SUBCELLULAR LOCATION</scope>
    <scope>DOMAIN</scope>
    <source>
        <strain>ATCC 10832 / Wood 46</strain>
    </source>
</reference>
<reference key="5">
    <citation type="journal article" date="1992" name="J. Biol. Chem.">
        <title>Assembly of the oligomeric membrane pore formed by Staphylococcal alpha-hemolysin examined by truncation mutagenesis.</title>
        <authorList>
            <person name="Walker B."/>
            <person name="Krishnasastry M."/>
            <person name="Zorn L."/>
            <person name="Bayley H."/>
        </authorList>
    </citation>
    <scope>SUBUNIT</scope>
    <scope>MUTAGENESIS OF 28-ASP-SER-29; 28-ASP--ASP-39; 28-ASP--GLY-49; 28-ASP--PHE-65; 312-TRP--ASN-319; 315-GLU--ASN-319 AND 317-MET--ASN-319</scope>
</reference>
<reference key="6">
    <citation type="journal article" date="1994" name="Infect. Immun.">
        <title>Site-directed mutagenesis of the alpha-toxin gene of Staphylococcus aureus: role of histidines in toxin activity in vitro and in a murine model.</title>
        <authorList>
            <person name="Menzies B.E."/>
            <person name="Kernodle D.S."/>
        </authorList>
    </citation>
    <scope>MUTAGENESIS OF HIS-61; HIS-74; HIS-170 AND HIS-285</scope>
    <source>
        <strain>8325-4</strain>
    </source>
</reference>
<reference key="7">
    <citation type="journal article" date="1994" name="Infect. Immun.">
        <title>Histidine residues near the N-terminus of staphylococcal alpha-toxin as reporters of regions that are critical for oligomerization and pore formation.</title>
        <authorList>
            <person name="Jursch R."/>
            <person name="Hildebrand A."/>
            <person name="Hobom G."/>
            <person name="Tranum-Jensen J."/>
            <person name="Ward R."/>
            <person name="Kehoe M."/>
            <person name="Bhakdi S."/>
        </authorList>
    </citation>
    <scope>MUTAGENESIS OF HIS-61; HIS-74; HIS-170 AND HIS-285</scope>
</reference>
<reference key="8">
    <citation type="journal article" date="1995" name="J. Biol. Chem.">
        <title>Key residues for membrane binding, oligomerization, and pore forming activity of staphylococcal alpha-hemolysin identified by cysteine scanning mutagenesis and targeted chemical modification.</title>
        <authorList>
            <person name="Walker B."/>
            <person name="Bayley H."/>
        </authorList>
    </citation>
    <scope>MUTAGENESIS</scope>
</reference>
<reference key="9">
    <citation type="journal article" date="2010" name="Proc. Natl. Acad. Sci. U.S.A.">
        <title>Role of a disintegrin and metalloprotease 10 in Staphylococcus aureus alpha-hemolysin-mediated cellular injury.</title>
        <authorList>
            <person name="Wilke G.A."/>
            <person name="Bubeck Wardenburg J."/>
        </authorList>
    </citation>
    <scope>FUNCTION</scope>
    <scope>INTERACTION WITH HUMAN ADAM10</scope>
    <scope>MUTAGENESIS OF HIS-61</scope>
</reference>
<name>HLA_STAAU</name>
<accession>P09616</accession>
<dbReference type="EMBL" id="X01645">
    <property type="protein sequence ID" value="CAA25801.1"/>
    <property type="molecule type" value="Genomic_DNA"/>
</dbReference>
<dbReference type="EMBL" id="M90536">
    <property type="protein sequence ID" value="AAA26598.1"/>
    <property type="molecule type" value="Genomic_DNA"/>
</dbReference>
<dbReference type="PIR" id="S69209">
    <property type="entry name" value="S69209"/>
</dbReference>
<dbReference type="PDB" id="3M2L">
    <property type="method" value="X-ray"/>
    <property type="resolution" value="2.10 A"/>
    <property type="chains" value="A/B/C/D/E/F/G=27-319"/>
</dbReference>
<dbReference type="PDB" id="3M3R">
    <property type="method" value="X-ray"/>
    <property type="resolution" value="2.20 A"/>
    <property type="chains" value="A/B/C/D/E/F/G=27-319"/>
</dbReference>
<dbReference type="PDB" id="3M4D">
    <property type="method" value="X-ray"/>
    <property type="resolution" value="1.90 A"/>
    <property type="chains" value="A/B/C/D/E/F/G=27-319"/>
</dbReference>
<dbReference type="PDB" id="3M4E">
    <property type="method" value="X-ray"/>
    <property type="resolution" value="2.30 A"/>
    <property type="chains" value="A/B/C/D/E/F/G=27-319"/>
</dbReference>
<dbReference type="PDB" id="4IDJ">
    <property type="method" value="X-ray"/>
    <property type="resolution" value="3.36 A"/>
    <property type="chains" value="A=27-319"/>
</dbReference>
<dbReference type="PDB" id="4YHD">
    <property type="method" value="X-ray"/>
    <property type="resolution" value="2.80 A"/>
    <property type="chains" value="A/B/C/D/E/G=27-319"/>
</dbReference>
<dbReference type="PDB" id="6U3T">
    <property type="method" value="X-ray"/>
    <property type="resolution" value="2.79 A"/>
    <property type="chains" value="A/B=27-319"/>
</dbReference>
<dbReference type="PDB" id="6U49">
    <property type="method" value="X-ray"/>
    <property type="resolution" value="2.35 A"/>
    <property type="chains" value="A/B/C/D/E/F/G=27-319"/>
</dbReference>
<dbReference type="PDB" id="6U4P">
    <property type="method" value="X-ray"/>
    <property type="resolution" value="2.49 A"/>
    <property type="chains" value="A/B/C/D/E/F/G=27-319"/>
</dbReference>
<dbReference type="PDB" id="7AHL">
    <property type="method" value="X-ray"/>
    <property type="resolution" value="1.89 A"/>
    <property type="chains" value="A/B/C/D/E/F/G=27-319"/>
</dbReference>
<dbReference type="PDB" id="7O1Q">
    <property type="method" value="EM"/>
    <property type="resolution" value="3.40 A"/>
    <property type="chains" value="A/B/C/D/E/F/G=27-131, A/B/C/D/E/F/G=174-319"/>
</dbReference>
<dbReference type="PDB" id="8JX2">
    <property type="method" value="EM"/>
    <property type="resolution" value="2.20 A"/>
    <property type="chains" value="A/B/C/D/E/F/G/H/I/J/K/L/M/N=27-319"/>
</dbReference>
<dbReference type="PDB" id="8JX3">
    <property type="method" value="EM"/>
    <property type="resolution" value="2.20 A"/>
    <property type="chains" value="A/B/C/D/E/F/G/H/I/J/K/L/M/N=27-319"/>
</dbReference>
<dbReference type="PDBsum" id="3M2L"/>
<dbReference type="PDBsum" id="3M3R"/>
<dbReference type="PDBsum" id="3M4D"/>
<dbReference type="PDBsum" id="3M4E"/>
<dbReference type="PDBsum" id="4IDJ"/>
<dbReference type="PDBsum" id="4YHD"/>
<dbReference type="PDBsum" id="6U3T"/>
<dbReference type="PDBsum" id="6U49"/>
<dbReference type="PDBsum" id="6U4P"/>
<dbReference type="PDBsum" id="7AHL"/>
<dbReference type="PDBsum" id="7O1Q"/>
<dbReference type="PDBsum" id="8JX2"/>
<dbReference type="PDBsum" id="8JX3"/>
<dbReference type="EMDB" id="EMD-12696"/>
<dbReference type="EMDB" id="EMD-36688"/>
<dbReference type="EMDB" id="EMD-36689"/>
<dbReference type="SMR" id="P09616"/>
<dbReference type="DIP" id="DIP-59322N"/>
<dbReference type="IntAct" id="P09616">
    <property type="interactions" value="1"/>
</dbReference>
<dbReference type="ChEMBL" id="CHEMBL1075259"/>
<dbReference type="TCDB" id="1.C.3.1.1">
    <property type="family name" value="the Alpha-hemolysin channel-forming toxin (Alphahl) family"/>
</dbReference>
<dbReference type="ABCD" id="P09616">
    <property type="antibodies" value="22 sequenced antibodies"/>
</dbReference>
<dbReference type="Reactome" id="R-HSA-844456">
    <property type="pathway name" value="The NLRP3 inflammasome"/>
</dbReference>
<dbReference type="Reactome" id="R-HSA-9660826">
    <property type="pathway name" value="Purinergic signaling in leishmaniasis infection"/>
</dbReference>
<dbReference type="EvolutionaryTrace" id="P09616"/>
<dbReference type="PHI-base" id="PHI:10241"/>
<dbReference type="PHI-base" id="PHI:11285"/>
<dbReference type="PRO" id="PR:P09616"/>
<dbReference type="GO" id="GO:0005576">
    <property type="term" value="C:extracellular region"/>
    <property type="evidence" value="ECO:0007669"/>
    <property type="project" value="UniProtKB-SubCell"/>
</dbReference>
<dbReference type="GO" id="GO:0042802">
    <property type="term" value="F:identical protein binding"/>
    <property type="evidence" value="ECO:0000353"/>
    <property type="project" value="IntAct"/>
</dbReference>
<dbReference type="GO" id="GO:0090729">
    <property type="term" value="F:toxin activity"/>
    <property type="evidence" value="ECO:0000315"/>
    <property type="project" value="UniProtKB"/>
</dbReference>
<dbReference type="GO" id="GO:0051715">
    <property type="term" value="P:cytolysis in another organism"/>
    <property type="evidence" value="ECO:0007669"/>
    <property type="project" value="InterPro"/>
</dbReference>
<dbReference type="FunFam" id="2.70.240.10:FF:000001">
    <property type="entry name" value="Alpha-hemolysin"/>
    <property type="match status" value="1"/>
</dbReference>
<dbReference type="Gene3D" id="2.70.240.10">
    <property type="entry name" value="Leukocidin/porin MspA"/>
    <property type="match status" value="1"/>
</dbReference>
<dbReference type="InterPro" id="IPR005831">
    <property type="entry name" value="Aerolysin/haemolysin_CS"/>
</dbReference>
<dbReference type="InterPro" id="IPR003963">
    <property type="entry name" value="Bi-component_toxin_staph"/>
</dbReference>
<dbReference type="InterPro" id="IPR016183">
    <property type="entry name" value="Leukocidin/Hemolysin_toxin"/>
</dbReference>
<dbReference type="InterPro" id="IPR036435">
    <property type="entry name" value="Leukocidin/porin_MspA_sf"/>
</dbReference>
<dbReference type="NCBIfam" id="TIGR01002">
    <property type="entry name" value="hlyII"/>
    <property type="match status" value="1"/>
</dbReference>
<dbReference type="Pfam" id="PF07968">
    <property type="entry name" value="Leukocidin"/>
    <property type="match status" value="1"/>
</dbReference>
<dbReference type="PRINTS" id="PR01468">
    <property type="entry name" value="BICOMPNTOXIN"/>
</dbReference>
<dbReference type="SUPFAM" id="SSF56959">
    <property type="entry name" value="Leukocidin-like"/>
    <property type="match status" value="1"/>
</dbReference>
<dbReference type="PROSITE" id="PS00274">
    <property type="entry name" value="AEROLYSIN"/>
    <property type="match status" value="1"/>
</dbReference>